<evidence type="ECO:0000250" key="1"/>
<evidence type="ECO:0000305" key="2"/>
<keyword id="KW-0963">Cytoplasm</keyword>
<keyword id="KW-0324">Glycolysis</keyword>
<keyword id="KW-0520">NAD</keyword>
<keyword id="KW-0521">NADP</keyword>
<keyword id="KW-0560">Oxidoreductase</keyword>
<keyword id="KW-1185">Reference proteome</keyword>
<proteinExistence type="inferred from homology"/>
<gene>
    <name type="primary">gap</name>
    <name type="ordered locus">AF_1732</name>
</gene>
<comment type="catalytic activity">
    <reaction>
        <text>D-glyceraldehyde 3-phosphate + phosphate + NADP(+) = (2R)-3-phospho-glyceroyl phosphate + NADPH + H(+)</text>
        <dbReference type="Rhea" id="RHEA:10296"/>
        <dbReference type="ChEBI" id="CHEBI:15378"/>
        <dbReference type="ChEBI" id="CHEBI:43474"/>
        <dbReference type="ChEBI" id="CHEBI:57604"/>
        <dbReference type="ChEBI" id="CHEBI:57783"/>
        <dbReference type="ChEBI" id="CHEBI:58349"/>
        <dbReference type="ChEBI" id="CHEBI:59776"/>
        <dbReference type="EC" id="1.2.1.59"/>
    </reaction>
</comment>
<comment type="catalytic activity">
    <reaction>
        <text>D-glyceraldehyde 3-phosphate + phosphate + NAD(+) = (2R)-3-phospho-glyceroyl phosphate + NADH + H(+)</text>
        <dbReference type="Rhea" id="RHEA:10300"/>
        <dbReference type="ChEBI" id="CHEBI:15378"/>
        <dbReference type="ChEBI" id="CHEBI:43474"/>
        <dbReference type="ChEBI" id="CHEBI:57540"/>
        <dbReference type="ChEBI" id="CHEBI:57604"/>
        <dbReference type="ChEBI" id="CHEBI:57945"/>
        <dbReference type="ChEBI" id="CHEBI:59776"/>
        <dbReference type="EC" id="1.2.1.59"/>
    </reaction>
</comment>
<comment type="pathway">
    <text>Carbohydrate degradation; glycolysis; pyruvate from D-glyceraldehyde 3-phosphate: step 1/5.</text>
</comment>
<comment type="subunit">
    <text evidence="1">Homotetramer.</text>
</comment>
<comment type="subcellular location">
    <subcellularLocation>
        <location evidence="1">Cytoplasm</location>
    </subcellularLocation>
</comment>
<comment type="similarity">
    <text evidence="2">Belongs to the glyceraldehyde-3-phosphate dehydrogenase family.</text>
</comment>
<dbReference type="EC" id="1.2.1.59"/>
<dbReference type="EMBL" id="AE000782">
    <property type="protein sequence ID" value="AAB89515.1"/>
    <property type="molecule type" value="Genomic_DNA"/>
</dbReference>
<dbReference type="PIR" id="C69466">
    <property type="entry name" value="C69466"/>
</dbReference>
<dbReference type="SMR" id="O28542"/>
<dbReference type="STRING" id="224325.AF_1732"/>
<dbReference type="PaxDb" id="224325-AF_1732"/>
<dbReference type="EnsemblBacteria" id="AAB89515">
    <property type="protein sequence ID" value="AAB89515"/>
    <property type="gene ID" value="AF_1732"/>
</dbReference>
<dbReference type="KEGG" id="afu:AF_1732"/>
<dbReference type="eggNOG" id="arCOG00493">
    <property type="taxonomic scope" value="Archaea"/>
</dbReference>
<dbReference type="HOGENOM" id="CLU_069533_0_0_2"/>
<dbReference type="PhylomeDB" id="O28542"/>
<dbReference type="UniPathway" id="UPA00109">
    <property type="reaction ID" value="UER00184"/>
</dbReference>
<dbReference type="Proteomes" id="UP000002199">
    <property type="component" value="Chromosome"/>
</dbReference>
<dbReference type="GO" id="GO:0005737">
    <property type="term" value="C:cytoplasm"/>
    <property type="evidence" value="ECO:0007669"/>
    <property type="project" value="UniProtKB-SubCell"/>
</dbReference>
<dbReference type="GO" id="GO:0008839">
    <property type="term" value="F:4-hydroxy-tetrahydrodipicolinate reductase"/>
    <property type="evidence" value="ECO:0007669"/>
    <property type="project" value="InterPro"/>
</dbReference>
<dbReference type="GO" id="GO:0004365">
    <property type="term" value="F:glyceraldehyde-3-phosphate dehydrogenase (NAD+) (phosphorylating) activity"/>
    <property type="evidence" value="ECO:0007669"/>
    <property type="project" value="UniProtKB-UniRule"/>
</dbReference>
<dbReference type="GO" id="GO:0047100">
    <property type="term" value="F:glyceraldehyde-3-phosphate dehydrogenase (NADP+) (phosphorylating) activity"/>
    <property type="evidence" value="ECO:0007669"/>
    <property type="project" value="RHEA"/>
</dbReference>
<dbReference type="GO" id="GO:0051287">
    <property type="term" value="F:NAD binding"/>
    <property type="evidence" value="ECO:0007669"/>
    <property type="project" value="InterPro"/>
</dbReference>
<dbReference type="GO" id="GO:0050661">
    <property type="term" value="F:NADP binding"/>
    <property type="evidence" value="ECO:0007669"/>
    <property type="project" value="InterPro"/>
</dbReference>
<dbReference type="GO" id="GO:0006096">
    <property type="term" value="P:glycolytic process"/>
    <property type="evidence" value="ECO:0007669"/>
    <property type="project" value="UniProtKB-UniRule"/>
</dbReference>
<dbReference type="GO" id="GO:0009089">
    <property type="term" value="P:lysine biosynthetic process via diaminopimelate"/>
    <property type="evidence" value="ECO:0007669"/>
    <property type="project" value="InterPro"/>
</dbReference>
<dbReference type="CDD" id="cd18127">
    <property type="entry name" value="GAPDH_II_C"/>
    <property type="match status" value="1"/>
</dbReference>
<dbReference type="CDD" id="cd02278">
    <property type="entry name" value="GAPDH_II_N"/>
    <property type="match status" value="1"/>
</dbReference>
<dbReference type="Gene3D" id="3.30.360.10">
    <property type="entry name" value="Dihydrodipicolinate Reductase, domain 2"/>
    <property type="match status" value="1"/>
</dbReference>
<dbReference type="Gene3D" id="3.40.50.720">
    <property type="entry name" value="NAD(P)-binding Rossmann-like Domain"/>
    <property type="match status" value="1"/>
</dbReference>
<dbReference type="HAMAP" id="MF_00559">
    <property type="entry name" value="G3P_dehdrog_arch"/>
    <property type="match status" value="1"/>
</dbReference>
<dbReference type="InterPro" id="IPR000846">
    <property type="entry name" value="DapB_N"/>
</dbReference>
<dbReference type="InterPro" id="IPR020831">
    <property type="entry name" value="GlycerAld/Erythrose_P_DH"/>
</dbReference>
<dbReference type="InterPro" id="IPR020830">
    <property type="entry name" value="GlycerAld_3-P_DH_AS"/>
</dbReference>
<dbReference type="InterPro" id="IPR020829">
    <property type="entry name" value="GlycerAld_3-P_DH_cat"/>
</dbReference>
<dbReference type="InterPro" id="IPR020828">
    <property type="entry name" value="GlycerAld_3-P_DH_NAD(P)-bd"/>
</dbReference>
<dbReference type="InterPro" id="IPR006436">
    <property type="entry name" value="Glyceraldehyde-3-P_DH_2_arc"/>
</dbReference>
<dbReference type="InterPro" id="IPR036291">
    <property type="entry name" value="NAD(P)-bd_dom_sf"/>
</dbReference>
<dbReference type="NCBIfam" id="TIGR01546">
    <property type="entry name" value="GAPDH-II_archae"/>
    <property type="match status" value="1"/>
</dbReference>
<dbReference type="NCBIfam" id="NF003251">
    <property type="entry name" value="PRK04207.1"/>
    <property type="match status" value="1"/>
</dbReference>
<dbReference type="Pfam" id="PF01113">
    <property type="entry name" value="DapB_N"/>
    <property type="match status" value="1"/>
</dbReference>
<dbReference type="Pfam" id="PF02800">
    <property type="entry name" value="Gp_dh_C"/>
    <property type="match status" value="1"/>
</dbReference>
<dbReference type="PIRSF" id="PIRSF000149">
    <property type="entry name" value="GAP_DH"/>
    <property type="match status" value="1"/>
</dbReference>
<dbReference type="SMART" id="SM00846">
    <property type="entry name" value="Gp_dh_N"/>
    <property type="match status" value="1"/>
</dbReference>
<dbReference type="SUPFAM" id="SSF55347">
    <property type="entry name" value="Glyceraldehyde-3-phosphate dehydrogenase-like, C-terminal domain"/>
    <property type="match status" value="1"/>
</dbReference>
<dbReference type="SUPFAM" id="SSF51735">
    <property type="entry name" value="NAD(P)-binding Rossmann-fold domains"/>
    <property type="match status" value="1"/>
</dbReference>
<dbReference type="PROSITE" id="PS00071">
    <property type="entry name" value="GAPDH"/>
    <property type="match status" value="1"/>
</dbReference>
<accession>O28542</accession>
<organism>
    <name type="scientific">Archaeoglobus fulgidus (strain ATCC 49558 / DSM 4304 / JCM 9628 / NBRC 100126 / VC-16)</name>
    <dbReference type="NCBI Taxonomy" id="224325"/>
    <lineage>
        <taxon>Archaea</taxon>
        <taxon>Methanobacteriati</taxon>
        <taxon>Methanobacteriota</taxon>
        <taxon>Archaeoglobi</taxon>
        <taxon>Archaeoglobales</taxon>
        <taxon>Archaeoglobaceae</taxon>
        <taxon>Archaeoglobus</taxon>
    </lineage>
</organism>
<feature type="chain" id="PRO_0000145716" description="Glyceraldehyde-3-phosphate dehydrogenase">
    <location>
        <begin position="1"/>
        <end position="340"/>
    </location>
</feature>
<feature type="active site" description="Nucleophile" evidence="1">
    <location>
        <position position="142"/>
    </location>
</feature>
<feature type="binding site" evidence="1">
    <location>
        <begin position="13"/>
        <end position="14"/>
    </location>
    <ligand>
        <name>NAD(+)</name>
        <dbReference type="ChEBI" id="CHEBI:57540"/>
    </ligand>
</feature>
<feature type="binding site" evidence="1">
    <location>
        <position position="112"/>
    </location>
    <ligand>
        <name>NAD(+)</name>
        <dbReference type="ChEBI" id="CHEBI:57540"/>
    </ligand>
</feature>
<feature type="binding site" evidence="1">
    <location>
        <begin position="141"/>
        <end position="143"/>
    </location>
    <ligand>
        <name>D-glyceraldehyde 3-phosphate</name>
        <dbReference type="ChEBI" id="CHEBI:59776"/>
    </ligand>
</feature>
<feature type="binding site" evidence="1">
    <location>
        <position position="170"/>
    </location>
    <ligand>
        <name>NAD(+)</name>
        <dbReference type="ChEBI" id="CHEBI:57540"/>
    </ligand>
</feature>
<feature type="binding site" evidence="1">
    <location>
        <begin position="196"/>
        <end position="197"/>
    </location>
    <ligand>
        <name>D-glyceraldehyde 3-phosphate</name>
        <dbReference type="ChEBI" id="CHEBI:59776"/>
    </ligand>
</feature>
<feature type="binding site" evidence="1">
    <location>
        <position position="302"/>
    </location>
    <ligand>
        <name>NAD(+)</name>
        <dbReference type="ChEBI" id="CHEBI:57540"/>
    </ligand>
</feature>
<name>G3P_ARCFU</name>
<sequence>MMKVKVAINGYGTIGKRVADAVSLQDDMEVVGVTKTRPDFEAKLGAKRYPLYVAKPENVELFERAGIEIQGTIEDLLPKADIVVDCSPNKVGAENKAKYYEKAGIKAIFQGGEKKDVAEVSFNALANYDEAVGKSYVRVVSCNTTGLTRLIYMLKTNFSIGRIRATMLRRVVDPKEDKKGLVNGIMPDPVAIPSHHGPDVKTVLPDVDIVTTAFKLPTTLMHVHSLCVEMREAVKAEDVVSALSEEPRIMLISAEDGFTSTAKVIEFARELRLRYDLYENIVWRESIGVDGNDLFVTQAVHQEAIVVPENIDAIRAMFELAEKEESIRKTNESLGIGKVF</sequence>
<reference key="1">
    <citation type="journal article" date="1997" name="Nature">
        <title>The complete genome sequence of the hyperthermophilic, sulphate-reducing archaeon Archaeoglobus fulgidus.</title>
        <authorList>
            <person name="Klenk H.-P."/>
            <person name="Clayton R.A."/>
            <person name="Tomb J.-F."/>
            <person name="White O."/>
            <person name="Nelson K.E."/>
            <person name="Ketchum K.A."/>
            <person name="Dodson R.J."/>
            <person name="Gwinn M.L."/>
            <person name="Hickey E.K."/>
            <person name="Peterson J.D."/>
            <person name="Richardson D.L."/>
            <person name="Kerlavage A.R."/>
            <person name="Graham D.E."/>
            <person name="Kyrpides N.C."/>
            <person name="Fleischmann R.D."/>
            <person name="Quackenbush J."/>
            <person name="Lee N.H."/>
            <person name="Sutton G.G."/>
            <person name="Gill S.R."/>
            <person name="Kirkness E.F."/>
            <person name="Dougherty B.A."/>
            <person name="McKenney K."/>
            <person name="Adams M.D."/>
            <person name="Loftus B.J."/>
            <person name="Peterson S.N."/>
            <person name="Reich C.I."/>
            <person name="McNeil L.K."/>
            <person name="Badger J.H."/>
            <person name="Glodek A."/>
            <person name="Zhou L."/>
            <person name="Overbeek R."/>
            <person name="Gocayne J.D."/>
            <person name="Weidman J.F."/>
            <person name="McDonald L.A."/>
            <person name="Utterback T.R."/>
            <person name="Cotton M.D."/>
            <person name="Spriggs T."/>
            <person name="Artiach P."/>
            <person name="Kaine B.P."/>
            <person name="Sykes S.M."/>
            <person name="Sadow P.W."/>
            <person name="D'Andrea K.P."/>
            <person name="Bowman C."/>
            <person name="Fujii C."/>
            <person name="Garland S.A."/>
            <person name="Mason T.M."/>
            <person name="Olsen G.J."/>
            <person name="Fraser C.M."/>
            <person name="Smith H.O."/>
            <person name="Woese C.R."/>
            <person name="Venter J.C."/>
        </authorList>
    </citation>
    <scope>NUCLEOTIDE SEQUENCE [LARGE SCALE GENOMIC DNA]</scope>
    <source>
        <strain>ATCC 49558 / DSM 4304 / JCM 9628 / NBRC 100126 / VC-16</strain>
    </source>
</reference>
<protein>
    <recommendedName>
        <fullName>Glyceraldehyde-3-phosphate dehydrogenase</fullName>
        <shortName>GAPDH</shortName>
        <ecNumber>1.2.1.59</ecNumber>
    </recommendedName>
    <alternativeName>
        <fullName>NAD(P)-dependent glyceraldehyde-3-phosphate dehydrogenase</fullName>
    </alternativeName>
</protein>